<evidence type="ECO:0000255" key="1">
    <source>
        <dbReference type="HAMAP-Rule" id="MF_01954"/>
    </source>
</evidence>
<protein>
    <recommendedName>
        <fullName evidence="1">Urease subunit beta</fullName>
        <ecNumber evidence="1">3.5.1.5</ecNumber>
    </recommendedName>
    <alternativeName>
        <fullName evidence="1">Urea amidohydrolase subunit beta</fullName>
    </alternativeName>
</protein>
<reference key="1">
    <citation type="journal article" date="2008" name="J. Bacteriol.">
        <title>Comparative genome sequence analysis of multidrug-resistant Acinetobacter baumannii.</title>
        <authorList>
            <person name="Adams M.D."/>
            <person name="Goglin K."/>
            <person name="Molyneaux N."/>
            <person name="Hujer K.M."/>
            <person name="Lavender H."/>
            <person name="Jamison J.J."/>
            <person name="MacDonald I.J."/>
            <person name="Martin K.M."/>
            <person name="Russo T."/>
            <person name="Campagnari A.A."/>
            <person name="Hujer A.M."/>
            <person name="Bonomo R.A."/>
            <person name="Gill S.R."/>
        </authorList>
    </citation>
    <scope>NUCLEOTIDE SEQUENCE [LARGE SCALE GENOMIC DNA]</scope>
    <source>
        <strain>AB0057</strain>
    </source>
</reference>
<feature type="chain" id="PRO_1000188902" description="Urease subunit beta">
    <location>
        <begin position="1"/>
        <end position="102"/>
    </location>
</feature>
<keyword id="KW-0963">Cytoplasm</keyword>
<keyword id="KW-0378">Hydrolase</keyword>
<sequence length="102" mass="11214">MIPGEVITPETDIELNVGRETLKVVVANLGDRPIQVGSHFHFYEANDALQFDREAVKGFRLNIAAGTAIRFEPGQSREVEIVALAGKREVYGFAGRVMGKLD</sequence>
<organism>
    <name type="scientific">Acinetobacter baumannii (strain AB0057)</name>
    <dbReference type="NCBI Taxonomy" id="480119"/>
    <lineage>
        <taxon>Bacteria</taxon>
        <taxon>Pseudomonadati</taxon>
        <taxon>Pseudomonadota</taxon>
        <taxon>Gammaproteobacteria</taxon>
        <taxon>Moraxellales</taxon>
        <taxon>Moraxellaceae</taxon>
        <taxon>Acinetobacter</taxon>
        <taxon>Acinetobacter calcoaceticus/baumannii complex</taxon>
    </lineage>
</organism>
<comment type="catalytic activity">
    <reaction evidence="1">
        <text>urea + 2 H2O + H(+) = hydrogencarbonate + 2 NH4(+)</text>
        <dbReference type="Rhea" id="RHEA:20557"/>
        <dbReference type="ChEBI" id="CHEBI:15377"/>
        <dbReference type="ChEBI" id="CHEBI:15378"/>
        <dbReference type="ChEBI" id="CHEBI:16199"/>
        <dbReference type="ChEBI" id="CHEBI:17544"/>
        <dbReference type="ChEBI" id="CHEBI:28938"/>
        <dbReference type="EC" id="3.5.1.5"/>
    </reaction>
</comment>
<comment type="pathway">
    <text evidence="1">Nitrogen metabolism; urea degradation; CO(2) and NH(3) from urea (urease route): step 1/1.</text>
</comment>
<comment type="subunit">
    <text evidence="1">Heterotrimer of UreA (gamma), UreB (beta) and UreC (alpha) subunits. Three heterotrimers associate to form the active enzyme.</text>
</comment>
<comment type="subcellular location">
    <subcellularLocation>
        <location evidence="1">Cytoplasm</location>
    </subcellularLocation>
</comment>
<comment type="similarity">
    <text evidence="1">Belongs to the urease beta subunit family.</text>
</comment>
<dbReference type="EC" id="3.5.1.5" evidence="1"/>
<dbReference type="EMBL" id="CP001182">
    <property type="protein sequence ID" value="ACJ40878.1"/>
    <property type="molecule type" value="Genomic_DNA"/>
</dbReference>
<dbReference type="RefSeq" id="WP_000612141.1">
    <property type="nucleotide sequence ID" value="NC_011586.2"/>
</dbReference>
<dbReference type="SMR" id="B7I8T4"/>
<dbReference type="KEGG" id="abn:AB57_1093"/>
<dbReference type="HOGENOM" id="CLU_129707_1_1_6"/>
<dbReference type="UniPathway" id="UPA00258">
    <property type="reaction ID" value="UER00370"/>
</dbReference>
<dbReference type="Proteomes" id="UP000007094">
    <property type="component" value="Chromosome"/>
</dbReference>
<dbReference type="GO" id="GO:0035550">
    <property type="term" value="C:urease complex"/>
    <property type="evidence" value="ECO:0007669"/>
    <property type="project" value="InterPro"/>
</dbReference>
<dbReference type="GO" id="GO:0009039">
    <property type="term" value="F:urease activity"/>
    <property type="evidence" value="ECO:0007669"/>
    <property type="project" value="UniProtKB-UniRule"/>
</dbReference>
<dbReference type="GO" id="GO:0043419">
    <property type="term" value="P:urea catabolic process"/>
    <property type="evidence" value="ECO:0007669"/>
    <property type="project" value="UniProtKB-UniRule"/>
</dbReference>
<dbReference type="CDD" id="cd00407">
    <property type="entry name" value="Urease_beta"/>
    <property type="match status" value="1"/>
</dbReference>
<dbReference type="FunFam" id="2.10.150.10:FF:000001">
    <property type="entry name" value="Urease subunit beta"/>
    <property type="match status" value="1"/>
</dbReference>
<dbReference type="Gene3D" id="2.10.150.10">
    <property type="entry name" value="Urease, beta subunit"/>
    <property type="match status" value="1"/>
</dbReference>
<dbReference type="HAMAP" id="MF_01954">
    <property type="entry name" value="Urease_beta"/>
    <property type="match status" value="1"/>
</dbReference>
<dbReference type="InterPro" id="IPR002019">
    <property type="entry name" value="Urease_beta-like"/>
</dbReference>
<dbReference type="InterPro" id="IPR036461">
    <property type="entry name" value="Urease_betasu_sf"/>
</dbReference>
<dbReference type="InterPro" id="IPR050069">
    <property type="entry name" value="Urease_subunit"/>
</dbReference>
<dbReference type="NCBIfam" id="NF009682">
    <property type="entry name" value="PRK13203.1"/>
    <property type="match status" value="1"/>
</dbReference>
<dbReference type="NCBIfam" id="TIGR00192">
    <property type="entry name" value="urease_beta"/>
    <property type="match status" value="1"/>
</dbReference>
<dbReference type="PANTHER" id="PTHR33569">
    <property type="entry name" value="UREASE"/>
    <property type="match status" value="1"/>
</dbReference>
<dbReference type="PANTHER" id="PTHR33569:SF1">
    <property type="entry name" value="UREASE"/>
    <property type="match status" value="1"/>
</dbReference>
<dbReference type="Pfam" id="PF00699">
    <property type="entry name" value="Urease_beta"/>
    <property type="match status" value="1"/>
</dbReference>
<dbReference type="SUPFAM" id="SSF51278">
    <property type="entry name" value="Urease, beta-subunit"/>
    <property type="match status" value="1"/>
</dbReference>
<gene>
    <name evidence="1" type="primary">ureB</name>
    <name type="ordered locus">AB57_1093</name>
</gene>
<accession>B7I8T4</accession>
<proteinExistence type="inferred from homology"/>
<name>URE2_ACIB5</name>